<gene>
    <name evidence="1" type="primary">ihfA</name>
    <name evidence="1" type="synonym">himA</name>
    <name type="ordered locus">BH07640</name>
</gene>
<accession>Q6G3K3</accession>
<reference key="1">
    <citation type="journal article" date="2004" name="Proc. Natl. Acad. Sci. U.S.A.">
        <title>The louse-borne human pathogen Bartonella quintana is a genomic derivative of the zoonotic agent Bartonella henselae.</title>
        <authorList>
            <person name="Alsmark U.C.M."/>
            <person name="Frank A.C."/>
            <person name="Karlberg E.O."/>
            <person name="Legault B.-A."/>
            <person name="Ardell D.H."/>
            <person name="Canbaeck B."/>
            <person name="Eriksson A.-S."/>
            <person name="Naeslund A.K."/>
            <person name="Handley S.A."/>
            <person name="Huvet M."/>
            <person name="La Scola B."/>
            <person name="Holmberg M."/>
            <person name="Andersson S.G.E."/>
        </authorList>
    </citation>
    <scope>NUCLEOTIDE SEQUENCE [LARGE SCALE GENOMIC DNA]</scope>
    <source>
        <strain>ATCC 49882 / DSM 28221 / CCUG 30454 / Houston 1</strain>
    </source>
</reference>
<name>IHFA_BARHE</name>
<organism>
    <name type="scientific">Bartonella henselae (strain ATCC 49882 / DSM 28221 / CCUG 30454 / Houston 1)</name>
    <name type="common">Rochalimaea henselae</name>
    <dbReference type="NCBI Taxonomy" id="283166"/>
    <lineage>
        <taxon>Bacteria</taxon>
        <taxon>Pseudomonadati</taxon>
        <taxon>Pseudomonadota</taxon>
        <taxon>Alphaproteobacteria</taxon>
        <taxon>Hyphomicrobiales</taxon>
        <taxon>Bartonellaceae</taxon>
        <taxon>Bartonella</taxon>
    </lineage>
</organism>
<protein>
    <recommendedName>
        <fullName evidence="1">Integration host factor subunit alpha</fullName>
        <shortName evidence="1">IHF-alpha</shortName>
    </recommendedName>
</protein>
<dbReference type="EMBL" id="BX897699">
    <property type="protein sequence ID" value="CAF27565.1"/>
    <property type="molecule type" value="Genomic_DNA"/>
</dbReference>
<dbReference type="RefSeq" id="WP_011180666.1">
    <property type="nucleotide sequence ID" value="NZ_LRIJ02000001.1"/>
</dbReference>
<dbReference type="SMR" id="Q6G3K3"/>
<dbReference type="PaxDb" id="283166-BH07640"/>
<dbReference type="EnsemblBacteria" id="CAF27565">
    <property type="protein sequence ID" value="CAF27565"/>
    <property type="gene ID" value="BH07640"/>
</dbReference>
<dbReference type="KEGG" id="bhe:BH07640"/>
<dbReference type="eggNOG" id="COG0776">
    <property type="taxonomic scope" value="Bacteria"/>
</dbReference>
<dbReference type="OrthoDB" id="9797747at2"/>
<dbReference type="Proteomes" id="UP000000421">
    <property type="component" value="Chromosome"/>
</dbReference>
<dbReference type="GO" id="GO:0005829">
    <property type="term" value="C:cytosol"/>
    <property type="evidence" value="ECO:0007669"/>
    <property type="project" value="TreeGrafter"/>
</dbReference>
<dbReference type="GO" id="GO:0003677">
    <property type="term" value="F:DNA binding"/>
    <property type="evidence" value="ECO:0007669"/>
    <property type="project" value="UniProtKB-UniRule"/>
</dbReference>
<dbReference type="GO" id="GO:0030527">
    <property type="term" value="F:structural constituent of chromatin"/>
    <property type="evidence" value="ECO:0007669"/>
    <property type="project" value="InterPro"/>
</dbReference>
<dbReference type="GO" id="GO:0006310">
    <property type="term" value="P:DNA recombination"/>
    <property type="evidence" value="ECO:0007669"/>
    <property type="project" value="UniProtKB-UniRule"/>
</dbReference>
<dbReference type="GO" id="GO:0009893">
    <property type="term" value="P:positive regulation of metabolic process"/>
    <property type="evidence" value="ECO:0007669"/>
    <property type="project" value="UniProtKB-ARBA"/>
</dbReference>
<dbReference type="GO" id="GO:0006355">
    <property type="term" value="P:regulation of DNA-templated transcription"/>
    <property type="evidence" value="ECO:0007669"/>
    <property type="project" value="UniProtKB-UniRule"/>
</dbReference>
<dbReference type="GO" id="GO:0006417">
    <property type="term" value="P:regulation of translation"/>
    <property type="evidence" value="ECO:0007669"/>
    <property type="project" value="UniProtKB-UniRule"/>
</dbReference>
<dbReference type="CDD" id="cd13835">
    <property type="entry name" value="IHF_A"/>
    <property type="match status" value="1"/>
</dbReference>
<dbReference type="Gene3D" id="4.10.520.10">
    <property type="entry name" value="IHF-like DNA-binding proteins"/>
    <property type="match status" value="1"/>
</dbReference>
<dbReference type="HAMAP" id="MF_00380">
    <property type="entry name" value="IHF_alpha"/>
    <property type="match status" value="1"/>
</dbReference>
<dbReference type="InterPro" id="IPR000119">
    <property type="entry name" value="Hist_DNA-bd"/>
</dbReference>
<dbReference type="InterPro" id="IPR020816">
    <property type="entry name" value="Histone-like_DNA-bd_CS"/>
</dbReference>
<dbReference type="InterPro" id="IPR010992">
    <property type="entry name" value="IHF-like_DNA-bd_dom_sf"/>
</dbReference>
<dbReference type="InterPro" id="IPR005684">
    <property type="entry name" value="IHF_alpha"/>
</dbReference>
<dbReference type="NCBIfam" id="NF001401">
    <property type="entry name" value="PRK00285.1"/>
    <property type="match status" value="1"/>
</dbReference>
<dbReference type="PANTHER" id="PTHR33175">
    <property type="entry name" value="DNA-BINDING PROTEIN HU"/>
    <property type="match status" value="1"/>
</dbReference>
<dbReference type="PANTHER" id="PTHR33175:SF2">
    <property type="entry name" value="INTEGRATION HOST FACTOR SUBUNIT ALPHA"/>
    <property type="match status" value="1"/>
</dbReference>
<dbReference type="Pfam" id="PF00216">
    <property type="entry name" value="Bac_DNA_binding"/>
    <property type="match status" value="1"/>
</dbReference>
<dbReference type="PRINTS" id="PR01727">
    <property type="entry name" value="DNABINDINGHU"/>
</dbReference>
<dbReference type="SMART" id="SM00411">
    <property type="entry name" value="BHL"/>
    <property type="match status" value="1"/>
</dbReference>
<dbReference type="SUPFAM" id="SSF47729">
    <property type="entry name" value="IHF-like DNA-binding proteins"/>
    <property type="match status" value="1"/>
</dbReference>
<dbReference type="PROSITE" id="PS00045">
    <property type="entry name" value="HISTONE_LIKE"/>
    <property type="match status" value="1"/>
</dbReference>
<feature type="chain" id="PRO_1000060534" description="Integration host factor subunit alpha">
    <location>
        <begin position="1"/>
        <end position="108"/>
    </location>
</feature>
<comment type="function">
    <text evidence="1">This protein is one of the two subunits of integration host factor, a specific DNA-binding protein that functions in genetic recombination as well as in transcriptional and translational control.</text>
</comment>
<comment type="subunit">
    <text evidence="1">Heterodimer of an alpha and a beta chain.</text>
</comment>
<comment type="similarity">
    <text evidence="1">Belongs to the bacterial histone-like protein family.</text>
</comment>
<evidence type="ECO:0000255" key="1">
    <source>
        <dbReference type="HAMAP-Rule" id="MF_00380"/>
    </source>
</evidence>
<sequence length="108" mass="11976">MTSKTVTRADLASVVCRKVGLSHTESAALVELVLNEICNSLVRGEAVKLSSFATFQVRKKNERVGRNPKTGVEAPILPRRVVTFKAANVLKQRILDSHRARQKIISHE</sequence>
<keyword id="KW-0233">DNA recombination</keyword>
<keyword id="KW-0238">DNA-binding</keyword>
<keyword id="KW-0804">Transcription</keyword>
<keyword id="KW-0805">Transcription regulation</keyword>
<keyword id="KW-0810">Translation regulation</keyword>
<proteinExistence type="inferred from homology"/>